<organism>
    <name type="scientific">Pelagibacter ubique (strain HTCC1062)</name>
    <dbReference type="NCBI Taxonomy" id="335992"/>
    <lineage>
        <taxon>Bacteria</taxon>
        <taxon>Pseudomonadati</taxon>
        <taxon>Pseudomonadota</taxon>
        <taxon>Alphaproteobacteria</taxon>
        <taxon>Candidatus Pelagibacterales</taxon>
        <taxon>Candidatus Pelagibacteraceae</taxon>
        <taxon>Candidatus Pelagibacter</taxon>
    </lineage>
</organism>
<feature type="chain" id="PRO_0000233529" description="Small ribosomal subunit protein uS17">
    <location>
        <begin position="1"/>
        <end position="78"/>
    </location>
</feature>
<evidence type="ECO:0000255" key="1">
    <source>
        <dbReference type="HAMAP-Rule" id="MF_01345"/>
    </source>
</evidence>
<evidence type="ECO:0000305" key="2"/>
<gene>
    <name evidence="1" type="primary">rpsQ</name>
    <name type="ordered locus">SAR11_1108</name>
</gene>
<protein>
    <recommendedName>
        <fullName evidence="1">Small ribosomal subunit protein uS17</fullName>
    </recommendedName>
    <alternativeName>
        <fullName evidence="2">30S ribosomal protein S17</fullName>
    </alternativeName>
</protein>
<reference key="1">
    <citation type="journal article" date="2005" name="Science">
        <title>Genome streamlining in a cosmopolitan oceanic bacterium.</title>
        <authorList>
            <person name="Giovannoni S.J."/>
            <person name="Tripp H.J."/>
            <person name="Givan S."/>
            <person name="Podar M."/>
            <person name="Vergin K.L."/>
            <person name="Baptista D."/>
            <person name="Bibbs L."/>
            <person name="Eads J."/>
            <person name="Richardson T.H."/>
            <person name="Noordewier M."/>
            <person name="Rappe M.S."/>
            <person name="Short J.M."/>
            <person name="Carrington J.C."/>
            <person name="Mathur E.J."/>
        </authorList>
    </citation>
    <scope>NUCLEOTIDE SEQUENCE [LARGE SCALE GENOMIC DNA]</scope>
    <source>
        <strain>HTCC1062</strain>
    </source>
</reference>
<name>RS17_PELUB</name>
<sequence>MPKKILTGVVTSDKPNKTITVSVERKYSHPVLKKVVKVRKKYNAHDENNKFKTGDTVSIIECKPFSKNKKFQVMDESK</sequence>
<dbReference type="EMBL" id="CP000084">
    <property type="protein sequence ID" value="AAZ21911.1"/>
    <property type="molecule type" value="Genomic_DNA"/>
</dbReference>
<dbReference type="RefSeq" id="WP_011282154.1">
    <property type="nucleotide sequence ID" value="NC_007205.1"/>
</dbReference>
<dbReference type="SMR" id="Q4FLM7"/>
<dbReference type="STRING" id="335992.SAR11_1108"/>
<dbReference type="GeneID" id="66295597"/>
<dbReference type="KEGG" id="pub:SAR11_1108"/>
<dbReference type="eggNOG" id="COG0186">
    <property type="taxonomic scope" value="Bacteria"/>
</dbReference>
<dbReference type="HOGENOM" id="CLU_073626_1_1_5"/>
<dbReference type="OrthoDB" id="9811714at2"/>
<dbReference type="Proteomes" id="UP000002528">
    <property type="component" value="Chromosome"/>
</dbReference>
<dbReference type="GO" id="GO:0022627">
    <property type="term" value="C:cytosolic small ribosomal subunit"/>
    <property type="evidence" value="ECO:0007669"/>
    <property type="project" value="TreeGrafter"/>
</dbReference>
<dbReference type="GO" id="GO:0019843">
    <property type="term" value="F:rRNA binding"/>
    <property type="evidence" value="ECO:0007669"/>
    <property type="project" value="UniProtKB-UniRule"/>
</dbReference>
<dbReference type="GO" id="GO:0003735">
    <property type="term" value="F:structural constituent of ribosome"/>
    <property type="evidence" value="ECO:0007669"/>
    <property type="project" value="InterPro"/>
</dbReference>
<dbReference type="GO" id="GO:0006412">
    <property type="term" value="P:translation"/>
    <property type="evidence" value="ECO:0007669"/>
    <property type="project" value="UniProtKB-UniRule"/>
</dbReference>
<dbReference type="CDD" id="cd00364">
    <property type="entry name" value="Ribosomal_uS17"/>
    <property type="match status" value="1"/>
</dbReference>
<dbReference type="Gene3D" id="2.40.50.140">
    <property type="entry name" value="Nucleic acid-binding proteins"/>
    <property type="match status" value="1"/>
</dbReference>
<dbReference type="HAMAP" id="MF_01345_B">
    <property type="entry name" value="Ribosomal_uS17_B"/>
    <property type="match status" value="1"/>
</dbReference>
<dbReference type="InterPro" id="IPR012340">
    <property type="entry name" value="NA-bd_OB-fold"/>
</dbReference>
<dbReference type="InterPro" id="IPR000266">
    <property type="entry name" value="Ribosomal_uS17"/>
</dbReference>
<dbReference type="InterPro" id="IPR019984">
    <property type="entry name" value="Ribosomal_uS17_bact/chlr"/>
</dbReference>
<dbReference type="NCBIfam" id="NF004123">
    <property type="entry name" value="PRK05610.1"/>
    <property type="match status" value="1"/>
</dbReference>
<dbReference type="NCBIfam" id="TIGR03635">
    <property type="entry name" value="uS17_bact"/>
    <property type="match status" value="1"/>
</dbReference>
<dbReference type="PANTHER" id="PTHR10744">
    <property type="entry name" value="40S RIBOSOMAL PROTEIN S11 FAMILY MEMBER"/>
    <property type="match status" value="1"/>
</dbReference>
<dbReference type="PANTHER" id="PTHR10744:SF1">
    <property type="entry name" value="SMALL RIBOSOMAL SUBUNIT PROTEIN US17M"/>
    <property type="match status" value="1"/>
</dbReference>
<dbReference type="Pfam" id="PF00366">
    <property type="entry name" value="Ribosomal_S17"/>
    <property type="match status" value="1"/>
</dbReference>
<dbReference type="PRINTS" id="PR00973">
    <property type="entry name" value="RIBOSOMALS17"/>
</dbReference>
<dbReference type="SUPFAM" id="SSF50249">
    <property type="entry name" value="Nucleic acid-binding proteins"/>
    <property type="match status" value="1"/>
</dbReference>
<accession>Q4FLM7</accession>
<comment type="function">
    <text evidence="1">One of the primary rRNA binding proteins, it binds specifically to the 5'-end of 16S ribosomal RNA.</text>
</comment>
<comment type="subunit">
    <text evidence="1">Part of the 30S ribosomal subunit.</text>
</comment>
<comment type="similarity">
    <text evidence="1">Belongs to the universal ribosomal protein uS17 family.</text>
</comment>
<proteinExistence type="inferred from homology"/>
<keyword id="KW-1185">Reference proteome</keyword>
<keyword id="KW-0687">Ribonucleoprotein</keyword>
<keyword id="KW-0689">Ribosomal protein</keyword>
<keyword id="KW-0694">RNA-binding</keyword>
<keyword id="KW-0699">rRNA-binding</keyword>